<feature type="chain" id="PRO_0000367862" description="Ubiquitin-related modifier 1 homolog">
    <location>
        <begin position="1"/>
        <end position="101"/>
    </location>
</feature>
<feature type="modified residue" description="1-thioglycine" evidence="2">
    <location>
        <position position="101"/>
    </location>
</feature>
<feature type="cross-link" description="Glycyl lysine isopeptide (Gly-Lys) (interchain with K-? in acceptor proteins)" evidence="2">
    <location>
        <position position="101"/>
    </location>
</feature>
<gene>
    <name evidence="1" type="primary">Urm1</name>
    <name type="ORF">GM13742</name>
</gene>
<evidence type="ECO:0000250" key="1">
    <source>
        <dbReference type="UniProtKB" id="Q7KU86"/>
    </source>
</evidence>
<evidence type="ECO:0000255" key="2">
    <source>
        <dbReference type="HAMAP-Rule" id="MF_03048"/>
    </source>
</evidence>
<protein>
    <recommendedName>
        <fullName evidence="2">Ubiquitin-related modifier 1 homolog</fullName>
    </recommendedName>
</protein>
<sequence>MGTPELKIILEFSAGAELLFGNIKRRELTLDGNQKWTIANLLKWMHANILTERPELFLQEDTVRPGILVLINDTDWELLGELDYELQPNDNVLFISTLHGG</sequence>
<keyword id="KW-0963">Cytoplasm</keyword>
<keyword id="KW-1017">Isopeptide bond</keyword>
<keyword id="KW-1185">Reference proteome</keyword>
<keyword id="KW-0819">tRNA processing</keyword>
<keyword id="KW-0833">Ubl conjugation pathway</keyword>
<name>URM1_DROSE</name>
<comment type="function">
    <text evidence="2">Acts as a sulfur carrier required for 2-thiolation of mcm(5)S(2)U at tRNA wobble positions of cytosolic tRNA(Lys), tRNA(Glu) and tRNA(Gln). Serves as sulfur donor in tRNA 2-thiolation reaction by being thiocarboxylated (-COSH) at its C-terminus by MOCS3. The sulfur is then transferred to tRNA to form 2-thiolation of mcm(5)S(2)U. Also acts as a ubiquitin-like protein (UBL) that is covalently conjugated via an isopeptide bond to lysine residues of target proteins such as Prx2/Jafrac1, Ciao1, Eip71CD and GILT1. The thiocarboxylated form serves as substrate for conjugation and oxidative stress specifically induces the formation of UBL-protein conjugates.</text>
</comment>
<comment type="pathway">
    <text evidence="2">tRNA modification; 5-methoxycarbonylmethyl-2-thiouridine-tRNA biosynthesis.</text>
</comment>
<comment type="subunit">
    <text evidence="1">Interacts with cer.</text>
</comment>
<comment type="subcellular location">
    <subcellularLocation>
        <location evidence="2">Cytoplasm</location>
    </subcellularLocation>
</comment>
<comment type="PTM">
    <text evidence="2">C-terminal thiocarboxylation occurs in 2 steps, it is first acyl-adenylated (-COAMP) via the hesA/moeB/thiF part of the MOCS3 homolog, then thiocarboxylated (-COSH) via the rhodanese domain of the MOCS3 homolog.</text>
</comment>
<comment type="similarity">
    <text evidence="2">Belongs to the URM1 family.</text>
</comment>
<organism>
    <name type="scientific">Drosophila sechellia</name>
    <name type="common">Fruit fly</name>
    <dbReference type="NCBI Taxonomy" id="7238"/>
    <lineage>
        <taxon>Eukaryota</taxon>
        <taxon>Metazoa</taxon>
        <taxon>Ecdysozoa</taxon>
        <taxon>Arthropoda</taxon>
        <taxon>Hexapoda</taxon>
        <taxon>Insecta</taxon>
        <taxon>Pterygota</taxon>
        <taxon>Neoptera</taxon>
        <taxon>Endopterygota</taxon>
        <taxon>Diptera</taxon>
        <taxon>Brachycera</taxon>
        <taxon>Muscomorpha</taxon>
        <taxon>Ephydroidea</taxon>
        <taxon>Drosophilidae</taxon>
        <taxon>Drosophila</taxon>
        <taxon>Sophophora</taxon>
    </lineage>
</organism>
<dbReference type="EMBL" id="CH480817">
    <property type="protein sequence ID" value="EDW50870.1"/>
    <property type="molecule type" value="Genomic_DNA"/>
</dbReference>
<dbReference type="RefSeq" id="XP_002035734.1">
    <property type="nucleotide sequence ID" value="XM_002035698.1"/>
</dbReference>
<dbReference type="SMR" id="B4HVA2"/>
<dbReference type="STRING" id="7238.B4HVA2"/>
<dbReference type="EnsemblMetazoa" id="FBtr0196727">
    <property type="protein sequence ID" value="FBpp0195219"/>
    <property type="gene ID" value="FBgn0168673"/>
</dbReference>
<dbReference type="EnsemblMetazoa" id="XM_002035698.2">
    <property type="protein sequence ID" value="XP_002035734.2"/>
    <property type="gene ID" value="LOC6611178"/>
</dbReference>
<dbReference type="GeneID" id="6611178"/>
<dbReference type="KEGG" id="dse:6611178"/>
<dbReference type="CTD" id="81605"/>
<dbReference type="HOGENOM" id="CLU_148208_0_1_1"/>
<dbReference type="OMA" id="DYELQPN"/>
<dbReference type="OrthoDB" id="10248987at2759"/>
<dbReference type="PhylomeDB" id="B4HVA2"/>
<dbReference type="UniPathway" id="UPA00988"/>
<dbReference type="Proteomes" id="UP000001292">
    <property type="component" value="Unassembled WGS sequence"/>
</dbReference>
<dbReference type="GO" id="GO:0005829">
    <property type="term" value="C:cytosol"/>
    <property type="evidence" value="ECO:0007669"/>
    <property type="project" value="UniProtKB-UniRule"/>
</dbReference>
<dbReference type="GO" id="GO:0046329">
    <property type="term" value="P:negative regulation of JNK cascade"/>
    <property type="evidence" value="ECO:0007669"/>
    <property type="project" value="EnsemblMetazoa"/>
</dbReference>
<dbReference type="GO" id="GO:0032447">
    <property type="term" value="P:protein urmylation"/>
    <property type="evidence" value="ECO:0007669"/>
    <property type="project" value="UniProtKB-UniRule"/>
</dbReference>
<dbReference type="GO" id="GO:0034227">
    <property type="term" value="P:tRNA thio-modification"/>
    <property type="evidence" value="ECO:0007669"/>
    <property type="project" value="UniProtKB-UniRule"/>
</dbReference>
<dbReference type="GO" id="GO:0002098">
    <property type="term" value="P:tRNA wobble uridine modification"/>
    <property type="evidence" value="ECO:0007669"/>
    <property type="project" value="UniProtKB-UniRule"/>
</dbReference>
<dbReference type="CDD" id="cd01764">
    <property type="entry name" value="Ubl_Urm1"/>
    <property type="match status" value="1"/>
</dbReference>
<dbReference type="FunFam" id="3.10.20.30:FF:000021">
    <property type="entry name" value="Ubiquitin-related modifier 1"/>
    <property type="match status" value="1"/>
</dbReference>
<dbReference type="Gene3D" id="3.10.20.30">
    <property type="match status" value="1"/>
</dbReference>
<dbReference type="HAMAP" id="MF_03048">
    <property type="entry name" value="Urm1"/>
    <property type="match status" value="1"/>
</dbReference>
<dbReference type="InterPro" id="IPR012675">
    <property type="entry name" value="Beta-grasp_dom_sf"/>
</dbReference>
<dbReference type="InterPro" id="IPR016155">
    <property type="entry name" value="Mopterin_synth/thiamin_S_b"/>
</dbReference>
<dbReference type="InterPro" id="IPR015221">
    <property type="entry name" value="Urm1"/>
</dbReference>
<dbReference type="PANTHER" id="PTHR14986">
    <property type="entry name" value="RURM1 PROTEIN"/>
    <property type="match status" value="1"/>
</dbReference>
<dbReference type="Pfam" id="PF09138">
    <property type="entry name" value="Urm1"/>
    <property type="match status" value="1"/>
</dbReference>
<dbReference type="PIRSF" id="PIRSF037379">
    <property type="entry name" value="Ubiquitin-related_modifier_1"/>
    <property type="match status" value="1"/>
</dbReference>
<dbReference type="SUPFAM" id="SSF54285">
    <property type="entry name" value="MoaD/ThiS"/>
    <property type="match status" value="1"/>
</dbReference>
<accession>B4HVA2</accession>
<reference key="1">
    <citation type="journal article" date="2007" name="Nature">
        <title>Evolution of genes and genomes on the Drosophila phylogeny.</title>
        <authorList>
            <consortium name="Drosophila 12 genomes consortium"/>
        </authorList>
    </citation>
    <scope>NUCLEOTIDE SEQUENCE [LARGE SCALE GENOMIC DNA]</scope>
    <source>
        <strain>Rob3c / Tucson 14021-0248.25</strain>
    </source>
</reference>
<proteinExistence type="inferred from homology"/>